<organism>
    <name type="scientific">Escherichia coli (strain 55989 / EAEC)</name>
    <dbReference type="NCBI Taxonomy" id="585055"/>
    <lineage>
        <taxon>Bacteria</taxon>
        <taxon>Pseudomonadati</taxon>
        <taxon>Pseudomonadota</taxon>
        <taxon>Gammaproteobacteria</taxon>
        <taxon>Enterobacterales</taxon>
        <taxon>Enterobacteriaceae</taxon>
        <taxon>Escherichia</taxon>
    </lineage>
</organism>
<evidence type="ECO:0000255" key="1">
    <source>
        <dbReference type="HAMAP-Rule" id="MF_01848"/>
    </source>
</evidence>
<dbReference type="EC" id="2.1.1.181" evidence="1"/>
<dbReference type="EMBL" id="CU928145">
    <property type="protein sequence ID" value="CAU96717.1"/>
    <property type="molecule type" value="Genomic_DNA"/>
</dbReference>
<dbReference type="RefSeq" id="WP_001275941.1">
    <property type="nucleotide sequence ID" value="NZ_CP028304.1"/>
</dbReference>
<dbReference type="SMR" id="B7LC90"/>
<dbReference type="GeneID" id="93776621"/>
<dbReference type="KEGG" id="eck:EC55989_0851"/>
<dbReference type="HOGENOM" id="CLU_027534_3_0_6"/>
<dbReference type="Proteomes" id="UP000000746">
    <property type="component" value="Chromosome"/>
</dbReference>
<dbReference type="GO" id="GO:0005737">
    <property type="term" value="C:cytoplasm"/>
    <property type="evidence" value="ECO:0007669"/>
    <property type="project" value="UniProtKB-SubCell"/>
</dbReference>
<dbReference type="GO" id="GO:0052907">
    <property type="term" value="F:23S rRNA (adenine(1618)-N(6))-methyltransferase activity"/>
    <property type="evidence" value="ECO:0007669"/>
    <property type="project" value="UniProtKB-EC"/>
</dbReference>
<dbReference type="GO" id="GO:0070475">
    <property type="term" value="P:rRNA base methylation"/>
    <property type="evidence" value="ECO:0007669"/>
    <property type="project" value="TreeGrafter"/>
</dbReference>
<dbReference type="FunFam" id="3.40.50.150:FF:000045">
    <property type="entry name" value="Ribosomal RNA large subunit methyltransferase F"/>
    <property type="match status" value="1"/>
</dbReference>
<dbReference type="Gene3D" id="3.40.50.150">
    <property type="entry name" value="Vaccinia Virus protein VP39"/>
    <property type="match status" value="1"/>
</dbReference>
<dbReference type="HAMAP" id="MF_01848">
    <property type="entry name" value="23SrRNA_methyltr_F"/>
    <property type="match status" value="1"/>
</dbReference>
<dbReference type="InterPro" id="IPR010286">
    <property type="entry name" value="METTL16/RlmF"/>
</dbReference>
<dbReference type="InterPro" id="IPR016909">
    <property type="entry name" value="rRNA_lsu_MeTfrase_F"/>
</dbReference>
<dbReference type="InterPro" id="IPR029063">
    <property type="entry name" value="SAM-dependent_MTases_sf"/>
</dbReference>
<dbReference type="NCBIfam" id="NF008725">
    <property type="entry name" value="PRK11727.1"/>
    <property type="match status" value="1"/>
</dbReference>
<dbReference type="PANTHER" id="PTHR13393:SF0">
    <property type="entry name" value="RNA N6-ADENOSINE-METHYLTRANSFERASE METTL16"/>
    <property type="match status" value="1"/>
</dbReference>
<dbReference type="PANTHER" id="PTHR13393">
    <property type="entry name" value="SAM-DEPENDENT METHYLTRANSFERASE"/>
    <property type="match status" value="1"/>
</dbReference>
<dbReference type="Pfam" id="PF05971">
    <property type="entry name" value="Methyltransf_10"/>
    <property type="match status" value="1"/>
</dbReference>
<dbReference type="PIRSF" id="PIRSF029038">
    <property type="entry name" value="Mtase_YbiN_prd"/>
    <property type="match status" value="1"/>
</dbReference>
<dbReference type="SUPFAM" id="SSF53335">
    <property type="entry name" value="S-adenosyl-L-methionine-dependent methyltransferases"/>
    <property type="match status" value="1"/>
</dbReference>
<keyword id="KW-0963">Cytoplasm</keyword>
<keyword id="KW-0489">Methyltransferase</keyword>
<keyword id="KW-1185">Reference proteome</keyword>
<keyword id="KW-0698">rRNA processing</keyword>
<keyword id="KW-0949">S-adenosyl-L-methionine</keyword>
<keyword id="KW-0808">Transferase</keyword>
<comment type="function">
    <text evidence="1">Specifically methylates the adenine in position 1618 of 23S rRNA.</text>
</comment>
<comment type="catalytic activity">
    <reaction evidence="1">
        <text>adenosine(1618) in 23S rRNA + S-adenosyl-L-methionine = N(6)-methyladenosine(1618) in 23S rRNA + S-adenosyl-L-homocysteine + H(+)</text>
        <dbReference type="Rhea" id="RHEA:16497"/>
        <dbReference type="Rhea" id="RHEA-COMP:10229"/>
        <dbReference type="Rhea" id="RHEA-COMP:10231"/>
        <dbReference type="ChEBI" id="CHEBI:15378"/>
        <dbReference type="ChEBI" id="CHEBI:57856"/>
        <dbReference type="ChEBI" id="CHEBI:59789"/>
        <dbReference type="ChEBI" id="CHEBI:74411"/>
        <dbReference type="ChEBI" id="CHEBI:74449"/>
        <dbReference type="EC" id="2.1.1.181"/>
    </reaction>
</comment>
<comment type="subcellular location">
    <subcellularLocation>
        <location evidence="1">Cytoplasm</location>
    </subcellularLocation>
</comment>
<comment type="similarity">
    <text evidence="1">Belongs to the methyltransferase superfamily. METTL16/RlmF family.</text>
</comment>
<accession>B7LC90</accession>
<feature type="chain" id="PRO_1000188519" description="Ribosomal RNA large subunit methyltransferase F">
    <location>
        <begin position="1"/>
        <end position="308"/>
    </location>
</feature>
<sequence length="308" mass="34180">MSAQKPGLHPRNRHHSRYDLATLCQVNPELRQFLTLTPAGEQSVDFANPLAVKALNKALLAHFYAVANWDIPDGFLCPPVPGRADYIHHLADLLAEASGTIPANASILDIGVGANCIYPLIGVHEYGWRFTGSETSSQALSSAQAIISANPGLNRAIRLRRQKESGAIFNGIIHKNEQYDATLCNPPFHDSAAAARAGSERKRRNLGLNKDDALNFGGQQQELWCEGGEVAFIKKMIEESKGFAKQVMWFTSLVSRGENLPPLYRALTDVGAVKVVKKEMAQGQKQSRFIAWTFMNDEQRRRFVNRQR</sequence>
<gene>
    <name evidence="1" type="primary">rlmF</name>
    <name type="ordered locus">EC55989_0851</name>
</gene>
<name>RLMF_ECO55</name>
<reference key="1">
    <citation type="journal article" date="2009" name="PLoS Genet.">
        <title>Organised genome dynamics in the Escherichia coli species results in highly diverse adaptive paths.</title>
        <authorList>
            <person name="Touchon M."/>
            <person name="Hoede C."/>
            <person name="Tenaillon O."/>
            <person name="Barbe V."/>
            <person name="Baeriswyl S."/>
            <person name="Bidet P."/>
            <person name="Bingen E."/>
            <person name="Bonacorsi S."/>
            <person name="Bouchier C."/>
            <person name="Bouvet O."/>
            <person name="Calteau A."/>
            <person name="Chiapello H."/>
            <person name="Clermont O."/>
            <person name="Cruveiller S."/>
            <person name="Danchin A."/>
            <person name="Diard M."/>
            <person name="Dossat C."/>
            <person name="Karoui M.E."/>
            <person name="Frapy E."/>
            <person name="Garry L."/>
            <person name="Ghigo J.M."/>
            <person name="Gilles A.M."/>
            <person name="Johnson J."/>
            <person name="Le Bouguenec C."/>
            <person name="Lescat M."/>
            <person name="Mangenot S."/>
            <person name="Martinez-Jehanne V."/>
            <person name="Matic I."/>
            <person name="Nassif X."/>
            <person name="Oztas S."/>
            <person name="Petit M.A."/>
            <person name="Pichon C."/>
            <person name="Rouy Z."/>
            <person name="Ruf C.S."/>
            <person name="Schneider D."/>
            <person name="Tourret J."/>
            <person name="Vacherie B."/>
            <person name="Vallenet D."/>
            <person name="Medigue C."/>
            <person name="Rocha E.P.C."/>
            <person name="Denamur E."/>
        </authorList>
    </citation>
    <scope>NUCLEOTIDE SEQUENCE [LARGE SCALE GENOMIC DNA]</scope>
    <source>
        <strain>55989 / EAEC</strain>
    </source>
</reference>
<protein>
    <recommendedName>
        <fullName evidence="1">Ribosomal RNA large subunit methyltransferase F</fullName>
        <ecNumber evidence="1">2.1.1.181</ecNumber>
    </recommendedName>
    <alternativeName>
        <fullName evidence="1">23S rRNA mA1618 methyltransferase</fullName>
    </alternativeName>
    <alternativeName>
        <fullName evidence="1">rRNA adenine N-6-methyltransferase</fullName>
    </alternativeName>
</protein>
<proteinExistence type="inferred from homology"/>